<name>ISCR_YERPA</name>
<dbReference type="EMBL" id="CP000308">
    <property type="protein sequence ID" value="ABG14303.1"/>
    <property type="molecule type" value="Genomic_DNA"/>
</dbReference>
<dbReference type="RefSeq" id="WP_002222202.1">
    <property type="nucleotide sequence ID" value="NZ_CP009906.1"/>
</dbReference>
<dbReference type="SMR" id="Q1C5G9"/>
<dbReference type="GeneID" id="96662219"/>
<dbReference type="KEGG" id="ypa:YPA_2338"/>
<dbReference type="Proteomes" id="UP000001971">
    <property type="component" value="Chromosome"/>
</dbReference>
<dbReference type="GO" id="GO:0005829">
    <property type="term" value="C:cytosol"/>
    <property type="evidence" value="ECO:0007669"/>
    <property type="project" value="TreeGrafter"/>
</dbReference>
<dbReference type="GO" id="GO:0051537">
    <property type="term" value="F:2 iron, 2 sulfur cluster binding"/>
    <property type="evidence" value="ECO:0007669"/>
    <property type="project" value="UniProtKB-KW"/>
</dbReference>
<dbReference type="GO" id="GO:0003700">
    <property type="term" value="F:DNA-binding transcription factor activity"/>
    <property type="evidence" value="ECO:0007669"/>
    <property type="project" value="UniProtKB-UniRule"/>
</dbReference>
<dbReference type="GO" id="GO:0003690">
    <property type="term" value="F:double-stranded DNA binding"/>
    <property type="evidence" value="ECO:0007669"/>
    <property type="project" value="UniProtKB-UniRule"/>
</dbReference>
<dbReference type="GO" id="GO:0005506">
    <property type="term" value="F:iron ion binding"/>
    <property type="evidence" value="ECO:0007669"/>
    <property type="project" value="UniProtKB-UniRule"/>
</dbReference>
<dbReference type="FunFam" id="1.10.10.10:FF:000026">
    <property type="entry name" value="HTH-type transcriptional regulator IscR"/>
    <property type="match status" value="1"/>
</dbReference>
<dbReference type="Gene3D" id="1.10.10.10">
    <property type="entry name" value="Winged helix-like DNA-binding domain superfamily/Winged helix DNA-binding domain"/>
    <property type="match status" value="1"/>
</dbReference>
<dbReference type="HAMAP" id="MF_01176">
    <property type="entry name" value="HTH_type_IscR"/>
    <property type="match status" value="1"/>
</dbReference>
<dbReference type="InterPro" id="IPR010242">
    <property type="entry name" value="TF_HTH_IscR"/>
</dbReference>
<dbReference type="InterPro" id="IPR030489">
    <property type="entry name" value="TR_Rrf2-type_CS"/>
</dbReference>
<dbReference type="InterPro" id="IPR000944">
    <property type="entry name" value="Tscrpt_reg_Rrf2"/>
</dbReference>
<dbReference type="InterPro" id="IPR036388">
    <property type="entry name" value="WH-like_DNA-bd_sf"/>
</dbReference>
<dbReference type="InterPro" id="IPR036390">
    <property type="entry name" value="WH_DNA-bd_sf"/>
</dbReference>
<dbReference type="NCBIfam" id="TIGR02010">
    <property type="entry name" value="IscR"/>
    <property type="match status" value="1"/>
</dbReference>
<dbReference type="NCBIfam" id="NF008110">
    <property type="entry name" value="PRK10857.1"/>
    <property type="match status" value="1"/>
</dbReference>
<dbReference type="NCBIfam" id="TIGR00738">
    <property type="entry name" value="rrf2_super"/>
    <property type="match status" value="1"/>
</dbReference>
<dbReference type="PANTHER" id="PTHR33221:SF5">
    <property type="entry name" value="HTH-TYPE TRANSCRIPTIONAL REGULATOR ISCR"/>
    <property type="match status" value="1"/>
</dbReference>
<dbReference type="PANTHER" id="PTHR33221">
    <property type="entry name" value="WINGED HELIX-TURN-HELIX TRANSCRIPTIONAL REGULATOR, RRF2 FAMILY"/>
    <property type="match status" value="1"/>
</dbReference>
<dbReference type="Pfam" id="PF02082">
    <property type="entry name" value="Rrf2"/>
    <property type="match status" value="1"/>
</dbReference>
<dbReference type="SUPFAM" id="SSF46785">
    <property type="entry name" value="Winged helix' DNA-binding domain"/>
    <property type="match status" value="1"/>
</dbReference>
<dbReference type="PROSITE" id="PS01332">
    <property type="entry name" value="HTH_RRF2_1"/>
    <property type="match status" value="1"/>
</dbReference>
<dbReference type="PROSITE" id="PS51197">
    <property type="entry name" value="HTH_RRF2_2"/>
    <property type="match status" value="1"/>
</dbReference>
<accession>Q1C5G9</accession>
<sequence length="164" mass="17765">MRLTSKGRYAVTAMLDVALHSQDGPVPLADISERQGISLSYLEQLFSRLRKNGLVASVRGPGGGYLLGKDASAIAVGAVITAVDESVDATRCQGKEGCQGGNRCLTHTLWRDLSERISSFLNNITLAELVNNQDILEVADRQNNDTRRTANGRPQETINVNLRA</sequence>
<feature type="chain" id="PRO_0000268936" description="HTH-type transcriptional regulator IscR">
    <location>
        <begin position="1"/>
        <end position="164"/>
    </location>
</feature>
<feature type="domain" description="HTH rrf2-type" evidence="1">
    <location>
        <begin position="2"/>
        <end position="131"/>
    </location>
</feature>
<feature type="DNA-binding region" description="H-T-H motif" evidence="1">
    <location>
        <begin position="28"/>
        <end position="51"/>
    </location>
</feature>
<feature type="region of interest" description="Disordered" evidence="2">
    <location>
        <begin position="143"/>
        <end position="164"/>
    </location>
</feature>
<feature type="compositionally biased region" description="Polar residues" evidence="2">
    <location>
        <begin position="152"/>
        <end position="164"/>
    </location>
</feature>
<feature type="binding site" evidence="1">
    <location>
        <position position="92"/>
    </location>
    <ligand>
        <name>[2Fe-2S] cluster</name>
        <dbReference type="ChEBI" id="CHEBI:190135"/>
    </ligand>
</feature>
<feature type="binding site" evidence="1">
    <location>
        <position position="98"/>
    </location>
    <ligand>
        <name>[2Fe-2S] cluster</name>
        <dbReference type="ChEBI" id="CHEBI:190135"/>
    </ligand>
</feature>
<feature type="binding site" evidence="1">
    <location>
        <position position="104"/>
    </location>
    <ligand>
        <name>[2Fe-2S] cluster</name>
        <dbReference type="ChEBI" id="CHEBI:190135"/>
    </ligand>
</feature>
<evidence type="ECO:0000255" key="1">
    <source>
        <dbReference type="HAMAP-Rule" id="MF_01176"/>
    </source>
</evidence>
<evidence type="ECO:0000256" key="2">
    <source>
        <dbReference type="SAM" id="MobiDB-lite"/>
    </source>
</evidence>
<gene>
    <name evidence="1" type="primary">iscR</name>
    <name type="ordered locus">YPA_2338</name>
</gene>
<proteinExistence type="inferred from homology"/>
<comment type="function">
    <text evidence="1">Regulates the transcription of several operons and genes involved in the biogenesis of Fe-S clusters and Fe-S-containing proteins.</text>
</comment>
<comment type="cofactor">
    <cofactor evidence="1">
        <name>[2Fe-2S] cluster</name>
        <dbReference type="ChEBI" id="CHEBI:190135"/>
    </cofactor>
    <text evidence="1">Binds 1 [2Fe-2S] cluster.</text>
</comment>
<keyword id="KW-0001">2Fe-2S</keyword>
<keyword id="KW-0010">Activator</keyword>
<keyword id="KW-0238">DNA-binding</keyword>
<keyword id="KW-0408">Iron</keyword>
<keyword id="KW-0411">Iron-sulfur</keyword>
<keyword id="KW-0479">Metal-binding</keyword>
<keyword id="KW-0678">Repressor</keyword>
<keyword id="KW-0804">Transcription</keyword>
<keyword id="KW-0805">Transcription regulation</keyword>
<reference key="1">
    <citation type="journal article" date="2006" name="J. Bacteriol.">
        <title>Complete genome sequence of Yersinia pestis strains Antiqua and Nepal516: evidence of gene reduction in an emerging pathogen.</title>
        <authorList>
            <person name="Chain P.S.G."/>
            <person name="Hu P."/>
            <person name="Malfatti S.A."/>
            <person name="Radnedge L."/>
            <person name="Larimer F."/>
            <person name="Vergez L.M."/>
            <person name="Worsham P."/>
            <person name="Chu M.C."/>
            <person name="Andersen G.L."/>
        </authorList>
    </citation>
    <scope>NUCLEOTIDE SEQUENCE [LARGE SCALE GENOMIC DNA]</scope>
    <source>
        <strain>Antiqua</strain>
    </source>
</reference>
<organism>
    <name type="scientific">Yersinia pestis bv. Antiqua (strain Antiqua)</name>
    <dbReference type="NCBI Taxonomy" id="360102"/>
    <lineage>
        <taxon>Bacteria</taxon>
        <taxon>Pseudomonadati</taxon>
        <taxon>Pseudomonadota</taxon>
        <taxon>Gammaproteobacteria</taxon>
        <taxon>Enterobacterales</taxon>
        <taxon>Yersiniaceae</taxon>
        <taxon>Yersinia</taxon>
    </lineage>
</organism>
<protein>
    <recommendedName>
        <fullName evidence="1">HTH-type transcriptional regulator IscR</fullName>
    </recommendedName>
</protein>